<feature type="chain" id="PRO_0000054889" description="Uncharacterized short-chain type dehydrogenase/reductase y4vI">
    <location>
        <begin position="1"/>
        <end position="548"/>
    </location>
</feature>
<feature type="region of interest" description="Short-chain dehydrogenase/reductase 1">
    <location>
        <begin position="1"/>
        <end position="250"/>
    </location>
</feature>
<feature type="region of interest" description="Short-chain dehydrogenase/reductase 2">
    <location>
        <begin position="271"/>
        <end position="548"/>
    </location>
</feature>
<feature type="active site" description="Proton acceptor" evidence="2">
    <location>
        <position position="154"/>
    </location>
</feature>
<feature type="active site" description="Proton acceptor" evidence="2">
    <location>
        <position position="420"/>
    </location>
</feature>
<feature type="binding site" evidence="1">
    <location>
        <begin position="12"/>
        <end position="37"/>
    </location>
    <ligand>
        <name>NADP(+)</name>
        <dbReference type="ChEBI" id="CHEBI:58349"/>
    </ligand>
</feature>
<feature type="binding site" evidence="1">
    <location>
        <position position="141"/>
    </location>
    <ligand>
        <name>substrate</name>
    </ligand>
</feature>
<feature type="binding site" evidence="1">
    <location>
        <begin position="280"/>
        <end position="304"/>
    </location>
    <ligand>
        <name>NADP(+)</name>
        <dbReference type="ChEBI" id="CHEBI:58349"/>
    </ligand>
</feature>
<comment type="domain">
    <text>Contains two SDR domains.</text>
</comment>
<comment type="similarity">
    <text evidence="3">Belongs to the short-chain dehydrogenases/reductases (SDR) family.</text>
</comment>
<comment type="sequence caution" evidence="3">
    <conflict type="erroneous initiation">
        <sequence resource="EMBL-CDS" id="CAA92424"/>
    </conflict>
</comment>
<reference key="1">
    <citation type="journal article" date="1996" name="Genome Res.">
        <title>Sequencing the 500-kb GC-rich symbiotic replicon of Rhizobium sp. NGR234 using dye terminators and a thermostable 'sequenase': a beginning.</title>
        <authorList>
            <person name="Freiberg C."/>
            <person name="Perret X."/>
            <person name="Broughton W.J."/>
            <person name="Rosenthal A."/>
        </authorList>
    </citation>
    <scope>NUCLEOTIDE SEQUENCE [GENOMIC DNA]</scope>
</reference>
<reference key="2">
    <citation type="journal article" date="1997" name="Nature">
        <title>Molecular basis of symbiosis between Rhizobium and legumes.</title>
        <authorList>
            <person name="Freiberg C.A."/>
            <person name="Fellay R."/>
            <person name="Bairoch A."/>
            <person name="Broughton W.J."/>
            <person name="Rosenthal A."/>
            <person name="Perret X."/>
        </authorList>
    </citation>
    <scope>NUCLEOTIDE SEQUENCE [LARGE SCALE GENOMIC DNA]</scope>
    <source>
        <strain>NBRC 101917 / NGR234</strain>
    </source>
</reference>
<reference key="3">
    <citation type="journal article" date="2009" name="Appl. Environ. Microbiol.">
        <title>Rhizobium sp. strain NGR234 possesses a remarkable number of secretion systems.</title>
        <authorList>
            <person name="Schmeisser C."/>
            <person name="Liesegang H."/>
            <person name="Krysciak D."/>
            <person name="Bakkou N."/>
            <person name="Le Quere A."/>
            <person name="Wollherr A."/>
            <person name="Heinemeyer I."/>
            <person name="Morgenstern B."/>
            <person name="Pommerening-Roeser A."/>
            <person name="Flores M."/>
            <person name="Palacios R."/>
            <person name="Brenner S."/>
            <person name="Gottschalk G."/>
            <person name="Schmitz R.A."/>
            <person name="Broughton W.J."/>
            <person name="Perret X."/>
            <person name="Strittmatter A.W."/>
            <person name="Streit W.R."/>
        </authorList>
    </citation>
    <scope>NUCLEOTIDE SEQUENCE [LARGE SCALE GENOMIC DNA]</scope>
    <source>
        <strain>NBRC 101917 / NGR234</strain>
    </source>
</reference>
<accession>Q53217</accession>
<dbReference type="EC" id="1.-.-.-"/>
<dbReference type="EMBL" id="Z68203">
    <property type="protein sequence ID" value="CAA92424.1"/>
    <property type="status" value="ALT_INIT"/>
    <property type="molecule type" value="Genomic_DNA"/>
</dbReference>
<dbReference type="EMBL" id="U00090">
    <property type="protein sequence ID" value="AAB91897.1"/>
    <property type="molecule type" value="Genomic_DNA"/>
</dbReference>
<dbReference type="RefSeq" id="NP_444110.1">
    <property type="nucleotide sequence ID" value="NC_000914.2"/>
</dbReference>
<dbReference type="RefSeq" id="WP_010875153.1">
    <property type="nucleotide sequence ID" value="NC_000914.2"/>
</dbReference>
<dbReference type="SMR" id="Q53217"/>
<dbReference type="KEGG" id="rhi:NGR_a01150"/>
<dbReference type="PATRIC" id="fig|394.7.peg.100"/>
<dbReference type="eggNOG" id="COG1028">
    <property type="taxonomic scope" value="Bacteria"/>
</dbReference>
<dbReference type="HOGENOM" id="CLU_040287_0_0_5"/>
<dbReference type="OrthoDB" id="9805986at2"/>
<dbReference type="Proteomes" id="UP000001054">
    <property type="component" value="Plasmid pNGR234a"/>
</dbReference>
<dbReference type="GO" id="GO:0016616">
    <property type="term" value="F:oxidoreductase activity, acting on the CH-OH group of donors, NAD or NADP as acceptor"/>
    <property type="evidence" value="ECO:0007669"/>
    <property type="project" value="TreeGrafter"/>
</dbReference>
<dbReference type="CDD" id="cd05233">
    <property type="entry name" value="SDR_c"/>
    <property type="match status" value="1"/>
</dbReference>
<dbReference type="FunFam" id="3.40.50.720:FF:000084">
    <property type="entry name" value="Short-chain dehydrogenase reductase"/>
    <property type="match status" value="2"/>
</dbReference>
<dbReference type="Gene3D" id="3.40.50.720">
    <property type="entry name" value="NAD(P)-binding Rossmann-like Domain"/>
    <property type="match status" value="2"/>
</dbReference>
<dbReference type="InterPro" id="IPR036291">
    <property type="entry name" value="NAD(P)-bd_dom_sf"/>
</dbReference>
<dbReference type="InterPro" id="IPR020904">
    <property type="entry name" value="Sc_DH/Rdtase_CS"/>
</dbReference>
<dbReference type="InterPro" id="IPR002347">
    <property type="entry name" value="SDR_fam"/>
</dbReference>
<dbReference type="NCBIfam" id="NF005067">
    <property type="entry name" value="PRK06484.1"/>
    <property type="match status" value="1"/>
</dbReference>
<dbReference type="PANTHER" id="PTHR42760:SF133">
    <property type="entry name" value="3-OXOACYL-[ACYL-CARRIER-PROTEIN] REDUCTASE"/>
    <property type="match status" value="1"/>
</dbReference>
<dbReference type="PANTHER" id="PTHR42760">
    <property type="entry name" value="SHORT-CHAIN DEHYDROGENASES/REDUCTASES FAMILY MEMBER"/>
    <property type="match status" value="1"/>
</dbReference>
<dbReference type="Pfam" id="PF13561">
    <property type="entry name" value="adh_short_C2"/>
    <property type="match status" value="2"/>
</dbReference>
<dbReference type="PRINTS" id="PR00081">
    <property type="entry name" value="GDHRDH"/>
</dbReference>
<dbReference type="PRINTS" id="PR00080">
    <property type="entry name" value="SDRFAMILY"/>
</dbReference>
<dbReference type="SUPFAM" id="SSF51735">
    <property type="entry name" value="NAD(P)-binding Rossmann-fold domains"/>
    <property type="match status" value="2"/>
</dbReference>
<dbReference type="PROSITE" id="PS00061">
    <property type="entry name" value="ADH_SHORT"/>
    <property type="match status" value="1"/>
</dbReference>
<sequence length="548" mass="57594">MDDRQVQPGRVIVVTGAAGGIGRALVDIFAANGDVVVAVDLPDSGVIELGQNLGEPHLGLEVDVSREDDVVALRALLEKRFSRIEVLVNNAGIGPTMAATADTALEDFQRALAINLVGAYSVACETAKLMKPGAAIVNVASLAGLLGNPKRSAYAASKAGLISITKSLACRWASRGIRVTAVAPGHVRTPMVAELERAGKLDVSAIRRRVPLGRIARPDEIARAVRFLASAQASYITGSTLVVDGGWMSVNQPGGAHQAQDRTPGAEFMRPVEDTDARTVIVMGGATGVGAAIARRFAENGDTVVIADGDGEEAVKLAGLLGDKHLSRRVDRTVETEVVSLFEELRERFGHLDVFVNGMNEILVPNTEESPEVLKRILDVNLTGAFTCVREAAISMRSGSVILNLGASLSLSPLAPSHAYGAYNAGIDMLTRCTAAELGPLGIRTATVAPGYIRTCAANRLAAVAGMDSASLRQRIPLGRVGDAEEVAEAAYFLASFDASYINGSILHVDGGLISSREAGWGSEVDGAISAEMRPQRRPAARWRLLSP</sequence>
<protein>
    <recommendedName>
        <fullName>Uncharacterized short-chain type dehydrogenase/reductase y4vI</fullName>
        <ecNumber>1.-.-.-</ecNumber>
    </recommendedName>
</protein>
<organism>
    <name type="scientific">Sinorhizobium fredii (strain NBRC 101917 / NGR234)</name>
    <dbReference type="NCBI Taxonomy" id="394"/>
    <lineage>
        <taxon>Bacteria</taxon>
        <taxon>Pseudomonadati</taxon>
        <taxon>Pseudomonadota</taxon>
        <taxon>Alphaproteobacteria</taxon>
        <taxon>Hyphomicrobiales</taxon>
        <taxon>Rhizobiaceae</taxon>
        <taxon>Sinorhizobium/Ensifer group</taxon>
        <taxon>Sinorhizobium</taxon>
    </lineage>
</organism>
<proteinExistence type="inferred from homology"/>
<gene>
    <name type="ordered locus">NGR_a01150</name>
    <name type="ORF">y4vI</name>
</gene>
<geneLocation type="plasmid">
    <name>sym pNGR234a</name>
</geneLocation>
<keyword id="KW-0511">Multifunctional enzyme</keyword>
<keyword id="KW-0560">Oxidoreductase</keyword>
<keyword id="KW-0614">Plasmid</keyword>
<keyword id="KW-1185">Reference proteome</keyword>
<keyword id="KW-0677">Repeat</keyword>
<evidence type="ECO:0000250" key="1"/>
<evidence type="ECO:0000255" key="2">
    <source>
        <dbReference type="PROSITE-ProRule" id="PRU10001"/>
    </source>
</evidence>
<evidence type="ECO:0000305" key="3"/>
<name>Y4VI_SINFN</name>